<evidence type="ECO:0000250" key="1"/>
<evidence type="ECO:0000256" key="2">
    <source>
        <dbReference type="SAM" id="MobiDB-lite"/>
    </source>
</evidence>
<evidence type="ECO:0000305" key="3"/>
<keyword id="KW-0493">Microtubule</keyword>
<keyword id="KW-1185">Reference proteome</keyword>
<comment type="function">
    <text evidence="1">Acts in maintaining the cortical microtubules organization essential for anisotropic cell growth.</text>
</comment>
<comment type="similarity">
    <text evidence="3">Belongs to the SPIRAL1 family.</text>
</comment>
<name>SP1L3_ORYSJ</name>
<proteinExistence type="inferred from homology"/>
<sequence>MGRGVSSGGGQSSLGYLFGGGEAPKSAEKPAPVQKPAPSSSAEKLKEIPAGIQSSKANNYMRAEGQNCGNFLTDRPSTKVQAAPGGGSSLDYLFSGNKDGK</sequence>
<protein>
    <recommendedName>
        <fullName>Protein SPIRAL1-like 3</fullName>
    </recommendedName>
</protein>
<accession>Q2QQ99</accession>
<accession>A0A0N7KU28</accession>
<reference key="1">
    <citation type="journal article" date="2005" name="BMC Biol.">
        <title>The sequence of rice chromosomes 11 and 12, rich in disease resistance genes and recent gene duplications.</title>
        <authorList>
            <consortium name="The rice chromosomes 11 and 12 sequencing consortia"/>
        </authorList>
    </citation>
    <scope>NUCLEOTIDE SEQUENCE [LARGE SCALE GENOMIC DNA]</scope>
    <source>
        <strain>cv. Nipponbare</strain>
    </source>
</reference>
<reference key="2">
    <citation type="journal article" date="2005" name="Nature">
        <title>The map-based sequence of the rice genome.</title>
        <authorList>
            <consortium name="International rice genome sequencing project (IRGSP)"/>
        </authorList>
    </citation>
    <scope>NUCLEOTIDE SEQUENCE [LARGE SCALE GENOMIC DNA]</scope>
    <source>
        <strain>cv. Nipponbare</strain>
    </source>
</reference>
<reference key="3">
    <citation type="journal article" date="2008" name="Nucleic Acids Res.">
        <title>The rice annotation project database (RAP-DB): 2008 update.</title>
        <authorList>
            <consortium name="The rice annotation project (RAP)"/>
        </authorList>
    </citation>
    <scope>GENOME REANNOTATION</scope>
    <source>
        <strain>cv. Nipponbare</strain>
    </source>
</reference>
<reference key="4">
    <citation type="journal article" date="2013" name="Rice">
        <title>Improvement of the Oryza sativa Nipponbare reference genome using next generation sequence and optical map data.</title>
        <authorList>
            <person name="Kawahara Y."/>
            <person name="de la Bastide M."/>
            <person name="Hamilton J.P."/>
            <person name="Kanamori H."/>
            <person name="McCombie W.R."/>
            <person name="Ouyang S."/>
            <person name="Schwartz D.C."/>
            <person name="Tanaka T."/>
            <person name="Wu J."/>
            <person name="Zhou S."/>
            <person name="Childs K.L."/>
            <person name="Davidson R.M."/>
            <person name="Lin H."/>
            <person name="Quesada-Ocampo L."/>
            <person name="Vaillancourt B."/>
            <person name="Sakai H."/>
            <person name="Lee S.S."/>
            <person name="Kim J."/>
            <person name="Numa H."/>
            <person name="Itoh T."/>
            <person name="Buell C.R."/>
            <person name="Matsumoto T."/>
        </authorList>
    </citation>
    <scope>GENOME REANNOTATION</scope>
    <source>
        <strain>cv. Nipponbare</strain>
    </source>
</reference>
<reference key="5">
    <citation type="journal article" date="2005" name="PLoS Biol.">
        <title>The genomes of Oryza sativa: a history of duplications.</title>
        <authorList>
            <person name="Yu J."/>
            <person name="Wang J."/>
            <person name="Lin W."/>
            <person name="Li S."/>
            <person name="Li H."/>
            <person name="Zhou J."/>
            <person name="Ni P."/>
            <person name="Dong W."/>
            <person name="Hu S."/>
            <person name="Zeng C."/>
            <person name="Zhang J."/>
            <person name="Zhang Y."/>
            <person name="Li R."/>
            <person name="Xu Z."/>
            <person name="Li S."/>
            <person name="Li X."/>
            <person name="Zheng H."/>
            <person name="Cong L."/>
            <person name="Lin L."/>
            <person name="Yin J."/>
            <person name="Geng J."/>
            <person name="Li G."/>
            <person name="Shi J."/>
            <person name="Liu J."/>
            <person name="Lv H."/>
            <person name="Li J."/>
            <person name="Wang J."/>
            <person name="Deng Y."/>
            <person name="Ran L."/>
            <person name="Shi X."/>
            <person name="Wang X."/>
            <person name="Wu Q."/>
            <person name="Li C."/>
            <person name="Ren X."/>
            <person name="Wang J."/>
            <person name="Wang X."/>
            <person name="Li D."/>
            <person name="Liu D."/>
            <person name="Zhang X."/>
            <person name="Ji Z."/>
            <person name="Zhao W."/>
            <person name="Sun Y."/>
            <person name="Zhang Z."/>
            <person name="Bao J."/>
            <person name="Han Y."/>
            <person name="Dong L."/>
            <person name="Ji J."/>
            <person name="Chen P."/>
            <person name="Wu S."/>
            <person name="Liu J."/>
            <person name="Xiao Y."/>
            <person name="Bu D."/>
            <person name="Tan J."/>
            <person name="Yang L."/>
            <person name="Ye C."/>
            <person name="Zhang J."/>
            <person name="Xu J."/>
            <person name="Zhou Y."/>
            <person name="Yu Y."/>
            <person name="Zhang B."/>
            <person name="Zhuang S."/>
            <person name="Wei H."/>
            <person name="Liu B."/>
            <person name="Lei M."/>
            <person name="Yu H."/>
            <person name="Li Y."/>
            <person name="Xu H."/>
            <person name="Wei S."/>
            <person name="He X."/>
            <person name="Fang L."/>
            <person name="Zhang Z."/>
            <person name="Zhang Y."/>
            <person name="Huang X."/>
            <person name="Su Z."/>
            <person name="Tong W."/>
            <person name="Li J."/>
            <person name="Tong Z."/>
            <person name="Li S."/>
            <person name="Ye J."/>
            <person name="Wang L."/>
            <person name="Fang L."/>
            <person name="Lei T."/>
            <person name="Chen C.-S."/>
            <person name="Chen H.-C."/>
            <person name="Xu Z."/>
            <person name="Li H."/>
            <person name="Huang H."/>
            <person name="Zhang F."/>
            <person name="Xu H."/>
            <person name="Li N."/>
            <person name="Zhao C."/>
            <person name="Li S."/>
            <person name="Dong L."/>
            <person name="Huang Y."/>
            <person name="Li L."/>
            <person name="Xi Y."/>
            <person name="Qi Q."/>
            <person name="Li W."/>
            <person name="Zhang B."/>
            <person name="Hu W."/>
            <person name="Zhang Y."/>
            <person name="Tian X."/>
            <person name="Jiao Y."/>
            <person name="Liang X."/>
            <person name="Jin J."/>
            <person name="Gao L."/>
            <person name="Zheng W."/>
            <person name="Hao B."/>
            <person name="Liu S.-M."/>
            <person name="Wang W."/>
            <person name="Yuan L."/>
            <person name="Cao M."/>
            <person name="McDermott J."/>
            <person name="Samudrala R."/>
            <person name="Wang J."/>
            <person name="Wong G.K.-S."/>
            <person name="Yang H."/>
        </authorList>
    </citation>
    <scope>NUCLEOTIDE SEQUENCE [LARGE SCALE GENOMIC DNA]</scope>
    <source>
        <strain>cv. Nipponbare</strain>
    </source>
</reference>
<reference key="6">
    <citation type="journal article" date="2003" name="Science">
        <title>Collection, mapping, and annotation of over 28,000 cDNA clones from japonica rice.</title>
        <authorList>
            <consortium name="The rice full-length cDNA consortium"/>
        </authorList>
    </citation>
    <scope>NUCLEOTIDE SEQUENCE [LARGE SCALE MRNA]</scope>
    <source>
        <strain>cv. Nipponbare</strain>
    </source>
</reference>
<feature type="chain" id="PRO_0000417966" description="Protein SPIRAL1-like 3">
    <location>
        <begin position="1"/>
        <end position="101"/>
    </location>
</feature>
<feature type="region of interest" description="Disordered" evidence="2">
    <location>
        <begin position="1"/>
        <end position="54"/>
    </location>
</feature>
<feature type="region of interest" description="Disordered" evidence="2">
    <location>
        <begin position="73"/>
        <end position="101"/>
    </location>
</feature>
<feature type="compositionally biased region" description="Gly residues" evidence="2">
    <location>
        <begin position="1"/>
        <end position="22"/>
    </location>
</feature>
<gene>
    <name type="ordered locus">Os12g0502000</name>
    <name type="ordered locus">LOC_Os12g31780</name>
    <name type="ORF">OsJ_36193</name>
</gene>
<organism>
    <name type="scientific">Oryza sativa subsp. japonica</name>
    <name type="common">Rice</name>
    <dbReference type="NCBI Taxonomy" id="39947"/>
    <lineage>
        <taxon>Eukaryota</taxon>
        <taxon>Viridiplantae</taxon>
        <taxon>Streptophyta</taxon>
        <taxon>Embryophyta</taxon>
        <taxon>Tracheophyta</taxon>
        <taxon>Spermatophyta</taxon>
        <taxon>Magnoliopsida</taxon>
        <taxon>Liliopsida</taxon>
        <taxon>Poales</taxon>
        <taxon>Poaceae</taxon>
        <taxon>BOP clade</taxon>
        <taxon>Oryzoideae</taxon>
        <taxon>Oryzeae</taxon>
        <taxon>Oryzinae</taxon>
        <taxon>Oryza</taxon>
        <taxon>Oryza sativa</taxon>
    </lineage>
</organism>
<dbReference type="EMBL" id="DP000011">
    <property type="protein sequence ID" value="ABA98636.1"/>
    <property type="molecule type" value="Genomic_DNA"/>
</dbReference>
<dbReference type="EMBL" id="AP008218">
    <property type="protein sequence ID" value="BAF29844.1"/>
    <property type="molecule type" value="Genomic_DNA"/>
</dbReference>
<dbReference type="EMBL" id="AP014968">
    <property type="protein sequence ID" value="BAT17258.1"/>
    <property type="molecule type" value="Genomic_DNA"/>
</dbReference>
<dbReference type="EMBL" id="CM000149">
    <property type="protein sequence ID" value="EAZ20584.1"/>
    <property type="molecule type" value="Genomic_DNA"/>
</dbReference>
<dbReference type="EMBL" id="AK060063">
    <property type="protein sequence ID" value="BAG87297.1"/>
    <property type="molecule type" value="mRNA"/>
</dbReference>
<dbReference type="RefSeq" id="XP_015619869.1">
    <property type="nucleotide sequence ID" value="XM_015764383.1"/>
</dbReference>
<dbReference type="FunCoup" id="Q2QQ99">
    <property type="interactions" value="52"/>
</dbReference>
<dbReference type="STRING" id="39947.Q2QQ99"/>
<dbReference type="PaxDb" id="39947-Q2QQ99"/>
<dbReference type="EnsemblPlants" id="Os12t0502000-01">
    <property type="protein sequence ID" value="Os12t0502000-01"/>
    <property type="gene ID" value="Os12g0502000"/>
</dbReference>
<dbReference type="Gramene" id="Os12t0502000-01">
    <property type="protein sequence ID" value="Os12t0502000-01"/>
    <property type="gene ID" value="Os12g0502000"/>
</dbReference>
<dbReference type="KEGG" id="dosa:Os12g0502000"/>
<dbReference type="eggNOG" id="ENOG502S4KK">
    <property type="taxonomic scope" value="Eukaryota"/>
</dbReference>
<dbReference type="HOGENOM" id="CLU_129558_0_0_1"/>
<dbReference type="InParanoid" id="Q2QQ99"/>
<dbReference type="OMA" id="ARKFYKM"/>
<dbReference type="OrthoDB" id="62622at2759"/>
<dbReference type="Proteomes" id="UP000000763">
    <property type="component" value="Chromosome 12"/>
</dbReference>
<dbReference type="Proteomes" id="UP000007752">
    <property type="component" value="Chromosome 12"/>
</dbReference>
<dbReference type="Proteomes" id="UP000059680">
    <property type="component" value="Chromosome 12"/>
</dbReference>
<dbReference type="GO" id="GO:0010005">
    <property type="term" value="C:cortical microtubule, transverse to long axis"/>
    <property type="evidence" value="ECO:0000318"/>
    <property type="project" value="GO_Central"/>
</dbReference>
<dbReference type="GO" id="GO:0043622">
    <property type="term" value="P:cortical microtubule organization"/>
    <property type="evidence" value="ECO:0000318"/>
    <property type="project" value="GO_Central"/>
</dbReference>
<dbReference type="InterPro" id="IPR039613">
    <property type="entry name" value="SPR1/2/3/4/5"/>
</dbReference>
<dbReference type="PANTHER" id="PTHR33403:SF38">
    <property type="entry name" value="PROTEIN SPIRAL1-LIKE 3"/>
    <property type="match status" value="1"/>
</dbReference>
<dbReference type="PANTHER" id="PTHR33403">
    <property type="entry name" value="SPR1"/>
    <property type="match status" value="1"/>
</dbReference>